<comment type="function">
    <text evidence="3 5">The specificity (S) subunit of a type I methyltransferase (MTase); this subunit dictates DNA sequence specificity. The single R subunit has multiple frameshifts and is probably not expressed.</text>
</comment>
<comment type="subunit">
    <text evidence="1">The methyltransferase is composed of M and S polypeptides.</text>
</comment>
<comment type="induction">
    <text evidence="2">Detected at low levels after 6 but not 96 hours growth (at protein level).</text>
</comment>
<comment type="domain">
    <text evidence="1">Contains two DNA recognition domains, each specifying recognition of one of the two defined components of the target sequence.</text>
</comment>
<comment type="similarity">
    <text evidence="4">Belongs to the type-I restriction system S methylase family.</text>
</comment>
<gene>
    <name type="ordered locus">MPN_365</name>
    <name type="ORF">H91_orf268</name>
    <name type="ORF">MP471</name>
</gene>
<protein>
    <recommendedName>
        <fullName evidence="3">Putative type I specificity subunit S.MpnORF365P</fullName>
        <shortName>S protein</shortName>
        <shortName evidence="3">S.MpnORF365P</shortName>
    </recommendedName>
    <alternativeName>
        <fullName>Putative type-1 restriction enzyme specificity subunit MPN_365</fullName>
    </alternativeName>
    <alternativeName>
        <fullName>S.MpnORFCP</fullName>
    </alternativeName>
</protein>
<sequence length="268" mass="31147">MEAPKHVNNACVIPNLTLKKMREIELDFPSKKIQEKIATILDTFTELSAELRERKKQYAFYRDYLLNQENIRKIYGANIPFETFQVKDICEIRRGRAITKAYIRNNPGENPVYSAATTNDGELGRIKDCDFDGEYITWTTNGYAGVVFYRNGKFNASQDCGVLKVKNKKICTKFLSFLLKIEAPKFVHNLASRPKLSQKVMAEIELSFPPLEIQEKIADILFAFEKLCNDLVEGIPAEVEMRKKQLDYYQNFLFNWVQEQKTQLEQIM</sequence>
<accession>P75416</accession>
<feature type="chain" id="PRO_0000198046" description="Putative type I specificity subunit S.MpnORF365P">
    <location>
        <begin position="1"/>
        <end position="268"/>
    </location>
</feature>
<keyword id="KW-0238">DNA-binding</keyword>
<keyword id="KW-1185">Reference proteome</keyword>
<keyword id="KW-0680">Restriction system</keyword>
<organism>
    <name type="scientific">Mycoplasma pneumoniae (strain ATCC 29342 / M129 / Subtype 1)</name>
    <name type="common">Mycoplasmoides pneumoniae</name>
    <dbReference type="NCBI Taxonomy" id="272634"/>
    <lineage>
        <taxon>Bacteria</taxon>
        <taxon>Bacillati</taxon>
        <taxon>Mycoplasmatota</taxon>
        <taxon>Mycoplasmoidales</taxon>
        <taxon>Mycoplasmoidaceae</taxon>
        <taxon>Mycoplasmoides</taxon>
    </lineage>
</organism>
<dbReference type="EMBL" id="U00089">
    <property type="protein sequence ID" value="AAB96119.1"/>
    <property type="molecule type" value="Genomic_DNA"/>
</dbReference>
<dbReference type="PIR" id="S73797">
    <property type="entry name" value="S73797"/>
</dbReference>
<dbReference type="SMR" id="P75416"/>
<dbReference type="IntAct" id="P75416">
    <property type="interactions" value="4"/>
</dbReference>
<dbReference type="STRING" id="272634.MPN_365"/>
<dbReference type="REBASE" id="6706">
    <property type="entry name" value="S.MpnORF365P"/>
</dbReference>
<dbReference type="EnsemblBacteria" id="AAB96119">
    <property type="protein sequence ID" value="AAB96119"/>
    <property type="gene ID" value="MPN_365"/>
</dbReference>
<dbReference type="KEGG" id="mpn:MPN_365"/>
<dbReference type="HOGENOM" id="CLU_021095_6_2_14"/>
<dbReference type="PRO" id="PR:P75416"/>
<dbReference type="Proteomes" id="UP000000808">
    <property type="component" value="Chromosome"/>
</dbReference>
<dbReference type="GO" id="GO:0003677">
    <property type="term" value="F:DNA binding"/>
    <property type="evidence" value="ECO:0007669"/>
    <property type="project" value="UniProtKB-KW"/>
</dbReference>
<dbReference type="GO" id="GO:0009307">
    <property type="term" value="P:DNA restriction-modification system"/>
    <property type="evidence" value="ECO:0007669"/>
    <property type="project" value="UniProtKB-KW"/>
</dbReference>
<dbReference type="CDD" id="cd17255">
    <property type="entry name" value="RMtype1_S_Fco49512ORF2615P-TRD2-CR2_like"/>
    <property type="match status" value="1"/>
</dbReference>
<dbReference type="Gene3D" id="3.90.220.20">
    <property type="entry name" value="DNA methylase specificity domains"/>
    <property type="match status" value="2"/>
</dbReference>
<dbReference type="InterPro" id="IPR000055">
    <property type="entry name" value="Restrct_endonuc_typeI_TRD"/>
</dbReference>
<dbReference type="InterPro" id="IPR044946">
    <property type="entry name" value="Restrct_endonuc_typeI_TRD_sf"/>
</dbReference>
<dbReference type="InterPro" id="IPR051212">
    <property type="entry name" value="Type-I_RE_S_subunit"/>
</dbReference>
<dbReference type="PANTHER" id="PTHR43140:SF1">
    <property type="entry name" value="TYPE I RESTRICTION ENZYME ECOKI SPECIFICITY SUBUNIT"/>
    <property type="match status" value="1"/>
</dbReference>
<dbReference type="PANTHER" id="PTHR43140">
    <property type="entry name" value="TYPE-1 RESTRICTION ENZYME ECOKI SPECIFICITY PROTEIN"/>
    <property type="match status" value="1"/>
</dbReference>
<dbReference type="Pfam" id="PF01420">
    <property type="entry name" value="Methylase_S"/>
    <property type="match status" value="2"/>
</dbReference>
<dbReference type="SUPFAM" id="SSF116734">
    <property type="entry name" value="DNA methylase specificity domain"/>
    <property type="match status" value="2"/>
</dbReference>
<reference key="1">
    <citation type="journal article" date="1996" name="Nucleic Acids Res.">
        <title>Complete sequence analysis of the genome of the bacterium Mycoplasma pneumoniae.</title>
        <authorList>
            <person name="Himmelreich R."/>
            <person name="Hilbert H."/>
            <person name="Plagens H."/>
            <person name="Pirkl E."/>
            <person name="Li B.-C."/>
            <person name="Herrmann R."/>
        </authorList>
    </citation>
    <scope>NUCLEOTIDE SEQUENCE [LARGE SCALE GENOMIC DNA]</scope>
    <source>
        <strain>ATCC 29342 / M129 / Subtype 1</strain>
    </source>
</reference>
<reference key="2">
    <citation type="journal article" date="2003" name="Nucleic Acids Res.">
        <title>A nomenclature for restriction enzymes, DNA methyltransferases, homing endonucleases and their genes.</title>
        <authorList>
            <person name="Roberts R.J."/>
            <person name="Belfort M."/>
            <person name="Bestor T."/>
            <person name="Bhagwat A.S."/>
            <person name="Bickle T.A."/>
            <person name="Bitinaite J."/>
            <person name="Blumenthal R.M."/>
            <person name="Degtyarev S.K."/>
            <person name="Dryden D.T."/>
            <person name="Dybvig K."/>
            <person name="Firman K."/>
            <person name="Gromova E.S."/>
            <person name="Gumport R.I."/>
            <person name="Halford S.E."/>
            <person name="Hattman S."/>
            <person name="Heitman J."/>
            <person name="Hornby D.P."/>
            <person name="Janulaitis A."/>
            <person name="Jeltsch A."/>
            <person name="Josephsen J."/>
            <person name="Kiss A."/>
            <person name="Klaenhammer T.R."/>
            <person name="Kobayashi I."/>
            <person name="Kong H."/>
            <person name="Krueger D.H."/>
            <person name="Lacks S."/>
            <person name="Marinus M.G."/>
            <person name="Miyahara M."/>
            <person name="Morgan R.D."/>
            <person name="Murray N.E."/>
            <person name="Nagaraja V."/>
            <person name="Piekarowicz A."/>
            <person name="Pingoud A."/>
            <person name="Raleigh E."/>
            <person name="Rao D.N."/>
            <person name="Reich N."/>
            <person name="Repin V.E."/>
            <person name="Selker E.U."/>
            <person name="Shaw P.C."/>
            <person name="Stein D.C."/>
            <person name="Stoddard B.L."/>
            <person name="Szybalski W."/>
            <person name="Trautner T.A."/>
            <person name="Van Etten J.L."/>
            <person name="Vitor J.M."/>
            <person name="Wilson G.G."/>
            <person name="Xu S.Y."/>
        </authorList>
    </citation>
    <scope>NOMENCLATURE</scope>
</reference>
<reference key="3">
    <citation type="journal article" date="2013" name="PLoS Genet.">
        <title>Comprehensive methylome characterization of Mycoplasma genitalium and Mycoplasma pneumoniae at single-base resolution.</title>
        <authorList>
            <person name="Lluch-Senar M."/>
            <person name="Luong K."/>
            <person name="Llorens-Rico V."/>
            <person name="Delgado J."/>
            <person name="Fang G."/>
            <person name="Spittle K."/>
            <person name="Clark T.A."/>
            <person name="Schadt E."/>
            <person name="Turner S.W."/>
            <person name="Korlach J."/>
            <person name="Serrano L."/>
        </authorList>
    </citation>
    <scope>INDUCTION</scope>
    <scope>DNA-BINDING</scope>
    <source>
        <strain>ATCC 29342 / M129 / Subtype 1</strain>
    </source>
</reference>
<name>T1SC_MYCPN</name>
<evidence type="ECO:0000250" key="1">
    <source>
        <dbReference type="UniProtKB" id="P05719"/>
    </source>
</evidence>
<evidence type="ECO:0000269" key="2">
    <source>
    </source>
</evidence>
<evidence type="ECO:0000303" key="3">
    <source>
    </source>
</evidence>
<evidence type="ECO:0000305" key="4"/>
<evidence type="ECO:0000305" key="5">
    <source>
    </source>
</evidence>
<proteinExistence type="evidence at protein level"/>